<keyword id="KW-1185">Reference proteome</keyword>
<keyword id="KW-0678">Repressor</keyword>
<keyword id="KW-0687">Ribonucleoprotein</keyword>
<keyword id="KW-0689">Ribosomal protein</keyword>
<keyword id="KW-0694">RNA-binding</keyword>
<keyword id="KW-0699">rRNA-binding</keyword>
<keyword id="KW-0810">Translation regulation</keyword>
<keyword id="KW-0820">tRNA-binding</keyword>
<comment type="function">
    <text evidence="1">Binds directly to 23S rRNA. The L1 stalk is quite mobile in the ribosome, and is involved in E site tRNA release.</text>
</comment>
<comment type="function">
    <text evidence="1">Protein L1 is also a translational repressor protein, it controls the translation of the L11 operon by binding to its mRNA.</text>
</comment>
<comment type="subunit">
    <text evidence="1">Part of the 50S ribosomal subunit.</text>
</comment>
<comment type="similarity">
    <text evidence="1">Belongs to the universal ribosomal protein uL1 family.</text>
</comment>
<accession>B8H0P3</accession>
<gene>
    <name evidence="1" type="primary">rplA</name>
    <name type="ordered locus">CCNA_00677</name>
</gene>
<feature type="chain" id="PRO_1000165668" description="Large ribosomal subunit protein uL1">
    <location>
        <begin position="1"/>
        <end position="229"/>
    </location>
</feature>
<name>RL1_CAUVN</name>
<evidence type="ECO:0000255" key="1">
    <source>
        <dbReference type="HAMAP-Rule" id="MF_01318"/>
    </source>
</evidence>
<evidence type="ECO:0000305" key="2"/>
<sequence length="229" mass="23735">MAKQPKRITAWTGDRDAAHSVEAAIALVKANAKAKFDETIEISVNLGVDPRHADQQVRGVVNLPSGTGRDVRVAVFAKDAKAAEATAAGAEHVGADDLYEKIAGGFMDFDRVIATPDMMALVGRLGKVLGPRGLMPNPKVGTVTPNVAQAVKDAKGGAVEFRVEKAGIVHAGIGKASFTDEALAINVKALIEALNRSKPSGAKGVFIKRVGLSSTMGPGFKVDISSIGA</sequence>
<reference key="1">
    <citation type="journal article" date="2010" name="J. Bacteriol.">
        <title>The genetic basis of laboratory adaptation in Caulobacter crescentus.</title>
        <authorList>
            <person name="Marks M.E."/>
            <person name="Castro-Rojas C.M."/>
            <person name="Teiling C."/>
            <person name="Du L."/>
            <person name="Kapatral V."/>
            <person name="Walunas T.L."/>
            <person name="Crosson S."/>
        </authorList>
    </citation>
    <scope>NUCLEOTIDE SEQUENCE [LARGE SCALE GENOMIC DNA]</scope>
    <source>
        <strain>NA1000 / CB15N</strain>
    </source>
</reference>
<organism>
    <name type="scientific">Caulobacter vibrioides (strain NA1000 / CB15N)</name>
    <name type="common">Caulobacter crescentus</name>
    <dbReference type="NCBI Taxonomy" id="565050"/>
    <lineage>
        <taxon>Bacteria</taxon>
        <taxon>Pseudomonadati</taxon>
        <taxon>Pseudomonadota</taxon>
        <taxon>Alphaproteobacteria</taxon>
        <taxon>Caulobacterales</taxon>
        <taxon>Caulobacteraceae</taxon>
        <taxon>Caulobacter</taxon>
    </lineage>
</organism>
<proteinExistence type="inferred from homology"/>
<protein>
    <recommendedName>
        <fullName evidence="1">Large ribosomal subunit protein uL1</fullName>
    </recommendedName>
    <alternativeName>
        <fullName evidence="2">50S ribosomal protein L1</fullName>
    </alternativeName>
</protein>
<dbReference type="EMBL" id="CP001340">
    <property type="protein sequence ID" value="ACL94142.1"/>
    <property type="molecule type" value="Genomic_DNA"/>
</dbReference>
<dbReference type="RefSeq" id="WP_010918526.1">
    <property type="nucleotide sequence ID" value="NC_011916.1"/>
</dbReference>
<dbReference type="RefSeq" id="YP_002516050.1">
    <property type="nucleotide sequence ID" value="NC_011916.1"/>
</dbReference>
<dbReference type="SMR" id="B8H0P3"/>
<dbReference type="GeneID" id="7330484"/>
<dbReference type="KEGG" id="ccs:CCNA_00677"/>
<dbReference type="PATRIC" id="fig|565050.3.peg.668"/>
<dbReference type="HOGENOM" id="CLU_062853_0_0_5"/>
<dbReference type="OrthoDB" id="9803740at2"/>
<dbReference type="PhylomeDB" id="B8H0P3"/>
<dbReference type="Proteomes" id="UP000001364">
    <property type="component" value="Chromosome"/>
</dbReference>
<dbReference type="GO" id="GO:0022625">
    <property type="term" value="C:cytosolic large ribosomal subunit"/>
    <property type="evidence" value="ECO:0007669"/>
    <property type="project" value="TreeGrafter"/>
</dbReference>
<dbReference type="GO" id="GO:0019843">
    <property type="term" value="F:rRNA binding"/>
    <property type="evidence" value="ECO:0007669"/>
    <property type="project" value="UniProtKB-UniRule"/>
</dbReference>
<dbReference type="GO" id="GO:0003735">
    <property type="term" value="F:structural constituent of ribosome"/>
    <property type="evidence" value="ECO:0007669"/>
    <property type="project" value="InterPro"/>
</dbReference>
<dbReference type="GO" id="GO:0000049">
    <property type="term" value="F:tRNA binding"/>
    <property type="evidence" value="ECO:0007669"/>
    <property type="project" value="UniProtKB-KW"/>
</dbReference>
<dbReference type="GO" id="GO:0006417">
    <property type="term" value="P:regulation of translation"/>
    <property type="evidence" value="ECO:0007669"/>
    <property type="project" value="UniProtKB-KW"/>
</dbReference>
<dbReference type="GO" id="GO:0006412">
    <property type="term" value="P:translation"/>
    <property type="evidence" value="ECO:0007669"/>
    <property type="project" value="UniProtKB-UniRule"/>
</dbReference>
<dbReference type="CDD" id="cd00403">
    <property type="entry name" value="Ribosomal_L1"/>
    <property type="match status" value="1"/>
</dbReference>
<dbReference type="FunFam" id="3.40.50.790:FF:000001">
    <property type="entry name" value="50S ribosomal protein L1"/>
    <property type="match status" value="1"/>
</dbReference>
<dbReference type="Gene3D" id="3.30.190.20">
    <property type="match status" value="1"/>
</dbReference>
<dbReference type="Gene3D" id="3.40.50.790">
    <property type="match status" value="1"/>
</dbReference>
<dbReference type="HAMAP" id="MF_01318_B">
    <property type="entry name" value="Ribosomal_uL1_B"/>
    <property type="match status" value="1"/>
</dbReference>
<dbReference type="InterPro" id="IPR005878">
    <property type="entry name" value="Ribosom_uL1_bac-type"/>
</dbReference>
<dbReference type="InterPro" id="IPR002143">
    <property type="entry name" value="Ribosomal_uL1"/>
</dbReference>
<dbReference type="InterPro" id="IPR023674">
    <property type="entry name" value="Ribosomal_uL1-like"/>
</dbReference>
<dbReference type="InterPro" id="IPR028364">
    <property type="entry name" value="Ribosomal_uL1/biogenesis"/>
</dbReference>
<dbReference type="InterPro" id="IPR016095">
    <property type="entry name" value="Ribosomal_uL1_3-a/b-sand"/>
</dbReference>
<dbReference type="InterPro" id="IPR023673">
    <property type="entry name" value="Ribosomal_uL1_CS"/>
</dbReference>
<dbReference type="NCBIfam" id="TIGR01169">
    <property type="entry name" value="rplA_bact"/>
    <property type="match status" value="1"/>
</dbReference>
<dbReference type="PANTHER" id="PTHR36427">
    <property type="entry name" value="54S RIBOSOMAL PROTEIN L1, MITOCHONDRIAL"/>
    <property type="match status" value="1"/>
</dbReference>
<dbReference type="PANTHER" id="PTHR36427:SF3">
    <property type="entry name" value="LARGE RIBOSOMAL SUBUNIT PROTEIN UL1M"/>
    <property type="match status" value="1"/>
</dbReference>
<dbReference type="Pfam" id="PF00687">
    <property type="entry name" value="Ribosomal_L1"/>
    <property type="match status" value="1"/>
</dbReference>
<dbReference type="PIRSF" id="PIRSF002155">
    <property type="entry name" value="Ribosomal_L1"/>
    <property type="match status" value="1"/>
</dbReference>
<dbReference type="SUPFAM" id="SSF56808">
    <property type="entry name" value="Ribosomal protein L1"/>
    <property type="match status" value="1"/>
</dbReference>
<dbReference type="PROSITE" id="PS01199">
    <property type="entry name" value="RIBOSOMAL_L1"/>
    <property type="match status" value="1"/>
</dbReference>